<feature type="chain" id="PRO_1000057133" description="LexA repressor">
    <location>
        <begin position="1"/>
        <end position="205"/>
    </location>
</feature>
<feature type="DNA-binding region" description="H-T-H motif" evidence="1">
    <location>
        <begin position="29"/>
        <end position="49"/>
    </location>
</feature>
<feature type="active site" description="For autocatalytic cleavage activity" evidence="1">
    <location>
        <position position="128"/>
    </location>
</feature>
<feature type="active site" description="For autocatalytic cleavage activity" evidence="1">
    <location>
        <position position="165"/>
    </location>
</feature>
<feature type="site" description="Cleavage; by autolysis" evidence="1">
    <location>
        <begin position="93"/>
        <end position="94"/>
    </location>
</feature>
<protein>
    <recommendedName>
        <fullName evidence="1">LexA repressor</fullName>
        <ecNumber evidence="1">3.4.21.88</ecNumber>
    </recommendedName>
</protein>
<sequence>MQPDLSPQLAMVLNYIRHFIDINGYPPSIRDICKATGLRSSSTVYNYLNKLEEKGYIRRDPSRSRAIEILTPYPALTRAKNMVSVPLLGKITAGQPILAFENIEDVFPLPADLAGAENAFMLHVSGDSMIEAGILDGDYLIVRPQDTAENGDIVVALLEDEATVKYFYRYPDHIELVPANSSMQPLIVHKVTILGKVVGLYRHFS</sequence>
<dbReference type="EC" id="3.4.21.88" evidence="1"/>
<dbReference type="EMBL" id="CP000232">
    <property type="protein sequence ID" value="ABC19434.1"/>
    <property type="molecule type" value="Genomic_DNA"/>
</dbReference>
<dbReference type="RefSeq" id="YP_429977.1">
    <property type="nucleotide sequence ID" value="NC_007644.1"/>
</dbReference>
<dbReference type="SMR" id="Q2RJF5"/>
<dbReference type="STRING" id="264732.Moth_1120"/>
<dbReference type="MEROPS" id="S24.001"/>
<dbReference type="EnsemblBacteria" id="ABC19434">
    <property type="protein sequence ID" value="ABC19434"/>
    <property type="gene ID" value="Moth_1120"/>
</dbReference>
<dbReference type="KEGG" id="mta:Moth_1120"/>
<dbReference type="PATRIC" id="fig|264732.11.peg.1201"/>
<dbReference type="eggNOG" id="COG1974">
    <property type="taxonomic scope" value="Bacteria"/>
</dbReference>
<dbReference type="HOGENOM" id="CLU_066192_45_1_9"/>
<dbReference type="OrthoDB" id="9802364at2"/>
<dbReference type="GO" id="GO:0003677">
    <property type="term" value="F:DNA binding"/>
    <property type="evidence" value="ECO:0007669"/>
    <property type="project" value="UniProtKB-UniRule"/>
</dbReference>
<dbReference type="GO" id="GO:0004252">
    <property type="term" value="F:serine-type endopeptidase activity"/>
    <property type="evidence" value="ECO:0007669"/>
    <property type="project" value="UniProtKB-UniRule"/>
</dbReference>
<dbReference type="GO" id="GO:0006281">
    <property type="term" value="P:DNA repair"/>
    <property type="evidence" value="ECO:0007669"/>
    <property type="project" value="UniProtKB-UniRule"/>
</dbReference>
<dbReference type="GO" id="GO:0006260">
    <property type="term" value="P:DNA replication"/>
    <property type="evidence" value="ECO:0007669"/>
    <property type="project" value="UniProtKB-UniRule"/>
</dbReference>
<dbReference type="GO" id="GO:0045892">
    <property type="term" value="P:negative regulation of DNA-templated transcription"/>
    <property type="evidence" value="ECO:0007669"/>
    <property type="project" value="UniProtKB-UniRule"/>
</dbReference>
<dbReference type="GO" id="GO:0006508">
    <property type="term" value="P:proteolysis"/>
    <property type="evidence" value="ECO:0007669"/>
    <property type="project" value="InterPro"/>
</dbReference>
<dbReference type="GO" id="GO:0009432">
    <property type="term" value="P:SOS response"/>
    <property type="evidence" value="ECO:0007669"/>
    <property type="project" value="UniProtKB-UniRule"/>
</dbReference>
<dbReference type="CDD" id="cd06529">
    <property type="entry name" value="S24_LexA-like"/>
    <property type="match status" value="1"/>
</dbReference>
<dbReference type="FunFam" id="2.10.109.10:FF:000001">
    <property type="entry name" value="LexA repressor"/>
    <property type="match status" value="1"/>
</dbReference>
<dbReference type="Gene3D" id="2.10.109.10">
    <property type="entry name" value="Umud Fragment, subunit A"/>
    <property type="match status" value="1"/>
</dbReference>
<dbReference type="Gene3D" id="1.10.10.10">
    <property type="entry name" value="Winged helix-like DNA-binding domain superfamily/Winged helix DNA-binding domain"/>
    <property type="match status" value="1"/>
</dbReference>
<dbReference type="HAMAP" id="MF_00015">
    <property type="entry name" value="LexA"/>
    <property type="match status" value="1"/>
</dbReference>
<dbReference type="InterPro" id="IPR006200">
    <property type="entry name" value="LexA"/>
</dbReference>
<dbReference type="InterPro" id="IPR039418">
    <property type="entry name" value="LexA-like"/>
</dbReference>
<dbReference type="InterPro" id="IPR036286">
    <property type="entry name" value="LexA/Signal_pep-like_sf"/>
</dbReference>
<dbReference type="InterPro" id="IPR006199">
    <property type="entry name" value="LexA_DNA-bd_dom"/>
</dbReference>
<dbReference type="InterPro" id="IPR050077">
    <property type="entry name" value="LexA_repressor"/>
</dbReference>
<dbReference type="InterPro" id="IPR006197">
    <property type="entry name" value="Peptidase_S24_LexA"/>
</dbReference>
<dbReference type="InterPro" id="IPR015927">
    <property type="entry name" value="Peptidase_S24_S26A/B/C"/>
</dbReference>
<dbReference type="InterPro" id="IPR036388">
    <property type="entry name" value="WH-like_DNA-bd_sf"/>
</dbReference>
<dbReference type="InterPro" id="IPR036390">
    <property type="entry name" value="WH_DNA-bd_sf"/>
</dbReference>
<dbReference type="NCBIfam" id="TIGR00498">
    <property type="entry name" value="lexA"/>
    <property type="match status" value="1"/>
</dbReference>
<dbReference type="PANTHER" id="PTHR33516">
    <property type="entry name" value="LEXA REPRESSOR"/>
    <property type="match status" value="1"/>
</dbReference>
<dbReference type="PANTHER" id="PTHR33516:SF2">
    <property type="entry name" value="LEXA REPRESSOR-RELATED"/>
    <property type="match status" value="1"/>
</dbReference>
<dbReference type="Pfam" id="PF01726">
    <property type="entry name" value="LexA_DNA_bind"/>
    <property type="match status" value="1"/>
</dbReference>
<dbReference type="Pfam" id="PF00717">
    <property type="entry name" value="Peptidase_S24"/>
    <property type="match status" value="1"/>
</dbReference>
<dbReference type="PRINTS" id="PR00726">
    <property type="entry name" value="LEXASERPTASE"/>
</dbReference>
<dbReference type="SUPFAM" id="SSF51306">
    <property type="entry name" value="LexA/Signal peptidase"/>
    <property type="match status" value="1"/>
</dbReference>
<dbReference type="SUPFAM" id="SSF46785">
    <property type="entry name" value="Winged helix' DNA-binding domain"/>
    <property type="match status" value="1"/>
</dbReference>
<keyword id="KW-0068">Autocatalytic cleavage</keyword>
<keyword id="KW-0227">DNA damage</keyword>
<keyword id="KW-0234">DNA repair</keyword>
<keyword id="KW-0235">DNA replication</keyword>
<keyword id="KW-0238">DNA-binding</keyword>
<keyword id="KW-0378">Hydrolase</keyword>
<keyword id="KW-0678">Repressor</keyword>
<keyword id="KW-0742">SOS response</keyword>
<keyword id="KW-0804">Transcription</keyword>
<keyword id="KW-0805">Transcription regulation</keyword>
<organism>
    <name type="scientific">Moorella thermoacetica (strain ATCC 39073 / JCM 9320)</name>
    <dbReference type="NCBI Taxonomy" id="264732"/>
    <lineage>
        <taxon>Bacteria</taxon>
        <taxon>Bacillati</taxon>
        <taxon>Bacillota</taxon>
        <taxon>Clostridia</taxon>
        <taxon>Moorellales</taxon>
        <taxon>Moorellaceae</taxon>
        <taxon>Moorella</taxon>
    </lineage>
</organism>
<gene>
    <name evidence="1" type="primary">lexA</name>
    <name type="ordered locus">Moth_1120</name>
</gene>
<proteinExistence type="inferred from homology"/>
<name>LEXA_MOOTA</name>
<evidence type="ECO:0000255" key="1">
    <source>
        <dbReference type="HAMAP-Rule" id="MF_00015"/>
    </source>
</evidence>
<reference key="1">
    <citation type="journal article" date="2008" name="Environ. Microbiol.">
        <title>The complete genome sequence of Moorella thermoacetica (f. Clostridium thermoaceticum).</title>
        <authorList>
            <person name="Pierce E."/>
            <person name="Xie G."/>
            <person name="Barabote R.D."/>
            <person name="Saunders E."/>
            <person name="Han C.S."/>
            <person name="Detter J.C."/>
            <person name="Richardson P."/>
            <person name="Brettin T.S."/>
            <person name="Das A."/>
            <person name="Ljungdahl L.G."/>
            <person name="Ragsdale S.W."/>
        </authorList>
    </citation>
    <scope>NUCLEOTIDE SEQUENCE [LARGE SCALE GENOMIC DNA]</scope>
    <source>
        <strain>ATCC 39073 / JCM 9320</strain>
    </source>
</reference>
<comment type="function">
    <text evidence="1">Represses a number of genes involved in the response to DNA damage (SOS response), including recA and lexA. In the presence of single-stranded DNA, RecA interacts with LexA causing an autocatalytic cleavage which disrupts the DNA-binding part of LexA, leading to derepression of the SOS regulon and eventually DNA repair.</text>
</comment>
<comment type="catalytic activity">
    <reaction evidence="1">
        <text>Hydrolysis of Ala-|-Gly bond in repressor LexA.</text>
        <dbReference type="EC" id="3.4.21.88"/>
    </reaction>
</comment>
<comment type="subunit">
    <text evidence="1">Homodimer.</text>
</comment>
<comment type="similarity">
    <text evidence="1">Belongs to the peptidase S24 family.</text>
</comment>
<accession>Q2RJF5</accession>